<feature type="chain" id="PRO_0000351114" description="DNA damage-binding protein CMR1">
    <location>
        <begin position="1"/>
        <end position="514"/>
    </location>
</feature>
<feature type="repeat" description="WD 1" evidence="2">
    <location>
        <begin position="180"/>
        <end position="221"/>
    </location>
</feature>
<feature type="repeat" description="WD 2" evidence="2">
    <location>
        <begin position="229"/>
        <end position="269"/>
    </location>
</feature>
<feature type="repeat" description="WD 3" evidence="2">
    <location>
        <begin position="280"/>
        <end position="320"/>
    </location>
</feature>
<feature type="repeat" description="WD 4" evidence="2">
    <location>
        <begin position="327"/>
        <end position="367"/>
    </location>
</feature>
<feature type="repeat" description="WD 5" evidence="2">
    <location>
        <begin position="385"/>
        <end position="423"/>
    </location>
</feature>
<feature type="repeat" description="WD 6" evidence="2">
    <location>
        <begin position="438"/>
        <end position="481"/>
    </location>
</feature>
<feature type="repeat" description="WD 7" evidence="2">
    <location>
        <begin position="483"/>
        <end position="514"/>
    </location>
</feature>
<feature type="region of interest" description="Disordered" evidence="3">
    <location>
        <begin position="26"/>
        <end position="116"/>
    </location>
</feature>
<feature type="compositionally biased region" description="Basic and acidic residues" evidence="3">
    <location>
        <begin position="34"/>
        <end position="44"/>
    </location>
</feature>
<feature type="compositionally biased region" description="Basic residues" evidence="3">
    <location>
        <begin position="45"/>
        <end position="55"/>
    </location>
</feature>
<feature type="compositionally biased region" description="Basic and acidic residues" evidence="3">
    <location>
        <begin position="56"/>
        <end position="65"/>
    </location>
</feature>
<feature type="compositionally biased region" description="Basic and acidic residues" evidence="3">
    <location>
        <begin position="92"/>
        <end position="116"/>
    </location>
</feature>
<proteinExistence type="inferred from homology"/>
<keyword id="KW-0227">DNA damage</keyword>
<keyword id="KW-0238">DNA-binding</keyword>
<keyword id="KW-1185">Reference proteome</keyword>
<keyword id="KW-0677">Repeat</keyword>
<keyword id="KW-0853">WD repeat</keyword>
<protein>
    <recommendedName>
        <fullName evidence="1">DNA damage-binding protein CMR1</fullName>
    </recommendedName>
</protein>
<dbReference type="EMBL" id="CP000499">
    <property type="protein sequence ID" value="ABN67280.2"/>
    <property type="molecule type" value="Genomic_DNA"/>
</dbReference>
<dbReference type="RefSeq" id="XP_001385309.2">
    <property type="nucleotide sequence ID" value="XM_001385272.1"/>
</dbReference>
<dbReference type="SMR" id="A3LWH8"/>
<dbReference type="FunCoup" id="A3LWH8">
    <property type="interactions" value="757"/>
</dbReference>
<dbReference type="STRING" id="322104.A3LWH8"/>
<dbReference type="GeneID" id="4839288"/>
<dbReference type="KEGG" id="pic:PICST_83842"/>
<dbReference type="eggNOG" id="KOG4328">
    <property type="taxonomic scope" value="Eukaryota"/>
</dbReference>
<dbReference type="HOGENOM" id="CLU_017019_1_1_1"/>
<dbReference type="InParanoid" id="A3LWH8"/>
<dbReference type="OMA" id="DPNTLYW"/>
<dbReference type="OrthoDB" id="9890280at2759"/>
<dbReference type="Proteomes" id="UP000002258">
    <property type="component" value="Chromosome 5"/>
</dbReference>
<dbReference type="GO" id="GO:0000785">
    <property type="term" value="C:chromatin"/>
    <property type="evidence" value="ECO:0007669"/>
    <property type="project" value="EnsemblFungi"/>
</dbReference>
<dbReference type="GO" id="GO:0005737">
    <property type="term" value="C:cytoplasm"/>
    <property type="evidence" value="ECO:0007669"/>
    <property type="project" value="EnsemblFungi"/>
</dbReference>
<dbReference type="GO" id="GO:0034399">
    <property type="term" value="C:nuclear periphery"/>
    <property type="evidence" value="ECO:0007669"/>
    <property type="project" value="EnsemblFungi"/>
</dbReference>
<dbReference type="GO" id="GO:0003677">
    <property type="term" value="F:DNA binding"/>
    <property type="evidence" value="ECO:0007669"/>
    <property type="project" value="UniProtKB-KW"/>
</dbReference>
<dbReference type="GO" id="GO:0006974">
    <property type="term" value="P:DNA damage response"/>
    <property type="evidence" value="ECO:0007669"/>
    <property type="project" value="UniProtKB-KW"/>
</dbReference>
<dbReference type="GO" id="GO:2000001">
    <property type="term" value="P:regulation of DNA damage checkpoint"/>
    <property type="evidence" value="ECO:0007669"/>
    <property type="project" value="EnsemblFungi"/>
</dbReference>
<dbReference type="Gene3D" id="2.130.10.10">
    <property type="entry name" value="YVTN repeat-like/Quinoprotein amine dehydrogenase"/>
    <property type="match status" value="1"/>
</dbReference>
<dbReference type="InterPro" id="IPR015943">
    <property type="entry name" value="WD40/YVTN_repeat-like_dom_sf"/>
</dbReference>
<dbReference type="InterPro" id="IPR019775">
    <property type="entry name" value="WD40_repeat_CS"/>
</dbReference>
<dbReference type="InterPro" id="IPR036322">
    <property type="entry name" value="WD40_repeat_dom_sf"/>
</dbReference>
<dbReference type="InterPro" id="IPR001680">
    <property type="entry name" value="WD40_rpt"/>
</dbReference>
<dbReference type="InterPro" id="IPR050853">
    <property type="entry name" value="WD_repeat_DNA-damage-binding"/>
</dbReference>
<dbReference type="PANTHER" id="PTHR14773">
    <property type="entry name" value="WD REPEAT-CONTAINING PROTEIN 76"/>
    <property type="match status" value="1"/>
</dbReference>
<dbReference type="PANTHER" id="PTHR14773:SF0">
    <property type="entry name" value="WD REPEAT-CONTAINING PROTEIN 76"/>
    <property type="match status" value="1"/>
</dbReference>
<dbReference type="Pfam" id="PF00400">
    <property type="entry name" value="WD40"/>
    <property type="match status" value="2"/>
</dbReference>
<dbReference type="SMART" id="SM00320">
    <property type="entry name" value="WD40"/>
    <property type="match status" value="5"/>
</dbReference>
<dbReference type="SUPFAM" id="SSF50978">
    <property type="entry name" value="WD40 repeat-like"/>
    <property type="match status" value="1"/>
</dbReference>
<dbReference type="PROSITE" id="PS00678">
    <property type="entry name" value="WD_REPEATS_1"/>
    <property type="match status" value="1"/>
</dbReference>
<dbReference type="PROSITE" id="PS50082">
    <property type="entry name" value="WD_REPEATS_2"/>
    <property type="match status" value="1"/>
</dbReference>
<dbReference type="PROSITE" id="PS50294">
    <property type="entry name" value="WD_REPEATS_REGION"/>
    <property type="match status" value="1"/>
</dbReference>
<sequence>MAKISEFERQRQENIQRNKELLKSLNLDSLSQSIKRELPRASETKKRKTTPRTKAVKKEDVEPSRRSRRIAGIKSELENPEEYNHKKSGSLKFEDKVIKSDSTEPEVKQEEKEELSEDIKNDNKVLHRLQALGDKFSAGDFFDIIQKNPIQYDDKVLQSTRDEFDKLKIYEKHNPLDIKISHTRITAINFHPSTTDRVVAAGDTNGNVGIWAVDSGEDDSEPTISILRPHGKAISRILTPVAEQNKLYSASYDGSVRVLDLNKLASTEVVYLNDPYENDDYALGVSDINFCASDANLLYMTTLSGSFHKHDIRTPFKPLKSKDILRLHDKKIGSFSINPNNTYQIATASLDRTLRIWDLRNVSKANAEWSEFENQISPHLYGSFSSRLSVSCVDWNSENRLVCNGYDDYINIFDLNEESLIPDNLKAFNKIKHNCQTGRWVSILKSKWQVAPEDGVQKFVIANMNRALDIYDQKGQIIAHLTDSVGAVPAVCGFHPTKNWVVGGSASGKVYLFE</sequence>
<name>CMR1_PICST</name>
<evidence type="ECO:0000250" key="1">
    <source>
        <dbReference type="UniProtKB" id="Q12510"/>
    </source>
</evidence>
<evidence type="ECO:0000255" key="2"/>
<evidence type="ECO:0000256" key="3">
    <source>
        <dbReference type="SAM" id="MobiDB-lite"/>
    </source>
</evidence>
<evidence type="ECO:0000305" key="4"/>
<reference key="1">
    <citation type="journal article" date="2007" name="Nat. Biotechnol.">
        <title>Genome sequence of the lignocellulose-bioconverting and xylose-fermenting yeast Pichia stipitis.</title>
        <authorList>
            <person name="Jeffries T.W."/>
            <person name="Grigoriev I.V."/>
            <person name="Grimwood J."/>
            <person name="Laplaza J.M."/>
            <person name="Aerts A."/>
            <person name="Salamov A."/>
            <person name="Schmutz J."/>
            <person name="Lindquist E."/>
            <person name="Dehal P."/>
            <person name="Shapiro H."/>
            <person name="Jin Y.-S."/>
            <person name="Passoth V."/>
            <person name="Richardson P.M."/>
        </authorList>
    </citation>
    <scope>NUCLEOTIDE SEQUENCE [LARGE SCALE GENOMIC DNA]</scope>
    <source>
        <strain>ATCC 58785 / CBS 6054 / NBRC 10063 / NRRL Y-11545</strain>
    </source>
</reference>
<comment type="function">
    <text evidence="1">DNA-binding protein that binds to both single- and double-stranded DNA. Binds preferentially to UV-damaged DNA. May be involved in DNA-metabolic processes.</text>
</comment>
<comment type="similarity">
    <text evidence="4">Belongs to the WD repeat DDB2/WDR76 family.</text>
</comment>
<organism>
    <name type="scientific">Scheffersomyces stipitis (strain ATCC 58785 / CBS 6054 / NBRC 10063 / NRRL Y-11545)</name>
    <name type="common">Yeast</name>
    <name type="synonym">Pichia stipitis</name>
    <dbReference type="NCBI Taxonomy" id="322104"/>
    <lineage>
        <taxon>Eukaryota</taxon>
        <taxon>Fungi</taxon>
        <taxon>Dikarya</taxon>
        <taxon>Ascomycota</taxon>
        <taxon>Saccharomycotina</taxon>
        <taxon>Pichiomycetes</taxon>
        <taxon>Debaryomycetaceae</taxon>
        <taxon>Scheffersomyces</taxon>
    </lineage>
</organism>
<gene>
    <name type="primary">PRW1</name>
    <name type="ORF">PICST_83842</name>
</gene>
<accession>A3LWH8</accession>